<dbReference type="EC" id="2.7.4.8" evidence="1"/>
<dbReference type="EMBL" id="CP000285">
    <property type="protein sequence ID" value="ABE60577.1"/>
    <property type="molecule type" value="Genomic_DNA"/>
</dbReference>
<dbReference type="RefSeq" id="WP_011508523.1">
    <property type="nucleotide sequence ID" value="NC_007963.1"/>
</dbReference>
<dbReference type="SMR" id="Q1QSI1"/>
<dbReference type="STRING" id="290398.Csal_3233"/>
<dbReference type="GeneID" id="95335925"/>
<dbReference type="KEGG" id="csa:Csal_3233"/>
<dbReference type="eggNOG" id="COG0194">
    <property type="taxonomic scope" value="Bacteria"/>
</dbReference>
<dbReference type="HOGENOM" id="CLU_001715_1_0_6"/>
<dbReference type="OrthoDB" id="9808150at2"/>
<dbReference type="Proteomes" id="UP000000239">
    <property type="component" value="Chromosome"/>
</dbReference>
<dbReference type="GO" id="GO:0005829">
    <property type="term" value="C:cytosol"/>
    <property type="evidence" value="ECO:0007669"/>
    <property type="project" value="TreeGrafter"/>
</dbReference>
<dbReference type="GO" id="GO:0005524">
    <property type="term" value="F:ATP binding"/>
    <property type="evidence" value="ECO:0007669"/>
    <property type="project" value="UniProtKB-UniRule"/>
</dbReference>
<dbReference type="GO" id="GO:0004385">
    <property type="term" value="F:guanylate kinase activity"/>
    <property type="evidence" value="ECO:0007669"/>
    <property type="project" value="UniProtKB-UniRule"/>
</dbReference>
<dbReference type="CDD" id="cd00071">
    <property type="entry name" value="GMPK"/>
    <property type="match status" value="1"/>
</dbReference>
<dbReference type="FunFam" id="3.30.63.10:FF:000002">
    <property type="entry name" value="Guanylate kinase 1"/>
    <property type="match status" value="1"/>
</dbReference>
<dbReference type="Gene3D" id="3.30.63.10">
    <property type="entry name" value="Guanylate Kinase phosphate binding domain"/>
    <property type="match status" value="1"/>
</dbReference>
<dbReference type="Gene3D" id="3.40.50.300">
    <property type="entry name" value="P-loop containing nucleotide triphosphate hydrolases"/>
    <property type="match status" value="1"/>
</dbReference>
<dbReference type="HAMAP" id="MF_00328">
    <property type="entry name" value="Guanylate_kinase"/>
    <property type="match status" value="1"/>
</dbReference>
<dbReference type="InterPro" id="IPR008145">
    <property type="entry name" value="GK/Ca_channel_bsu"/>
</dbReference>
<dbReference type="InterPro" id="IPR008144">
    <property type="entry name" value="Guanylate_kin-like_dom"/>
</dbReference>
<dbReference type="InterPro" id="IPR017665">
    <property type="entry name" value="Guanylate_kinase"/>
</dbReference>
<dbReference type="InterPro" id="IPR020590">
    <property type="entry name" value="Guanylate_kinase_CS"/>
</dbReference>
<dbReference type="InterPro" id="IPR027417">
    <property type="entry name" value="P-loop_NTPase"/>
</dbReference>
<dbReference type="NCBIfam" id="TIGR03263">
    <property type="entry name" value="guanyl_kin"/>
    <property type="match status" value="1"/>
</dbReference>
<dbReference type="PANTHER" id="PTHR23117:SF13">
    <property type="entry name" value="GUANYLATE KINASE"/>
    <property type="match status" value="1"/>
</dbReference>
<dbReference type="PANTHER" id="PTHR23117">
    <property type="entry name" value="GUANYLATE KINASE-RELATED"/>
    <property type="match status" value="1"/>
</dbReference>
<dbReference type="Pfam" id="PF00625">
    <property type="entry name" value="Guanylate_kin"/>
    <property type="match status" value="1"/>
</dbReference>
<dbReference type="SMART" id="SM00072">
    <property type="entry name" value="GuKc"/>
    <property type="match status" value="1"/>
</dbReference>
<dbReference type="SUPFAM" id="SSF52540">
    <property type="entry name" value="P-loop containing nucleoside triphosphate hydrolases"/>
    <property type="match status" value="1"/>
</dbReference>
<dbReference type="PROSITE" id="PS00856">
    <property type="entry name" value="GUANYLATE_KINASE_1"/>
    <property type="match status" value="1"/>
</dbReference>
<dbReference type="PROSITE" id="PS50052">
    <property type="entry name" value="GUANYLATE_KINASE_2"/>
    <property type="match status" value="1"/>
</dbReference>
<sequence>MPIQPPSKGTLYIVSAPSGAGKTSLVRALLERVAGIQVSVSHTTRAMRPGEQNGINYHFVDVATFERLIESGDFIEHARVFDNYYGTSRAAVQALLDAGQDVILEIDWQGARQVREAFDEAVSIFILPPSREALHARLAGRGTDDAATIARRMRDAVDEMSHYDEYEHVIINDTFDHALDELSCLVHAQRTRMPRVQAEHAPLLAALLSRVEDVE</sequence>
<proteinExistence type="inferred from homology"/>
<protein>
    <recommendedName>
        <fullName evidence="1">Guanylate kinase</fullName>
        <ecNumber evidence="1">2.7.4.8</ecNumber>
    </recommendedName>
    <alternativeName>
        <fullName evidence="1">GMP kinase</fullName>
    </alternativeName>
</protein>
<organism>
    <name type="scientific">Chromohalobacter salexigens (strain ATCC BAA-138 / DSM 3043 / CIP 106854 / NCIMB 13768 / 1H11)</name>
    <dbReference type="NCBI Taxonomy" id="290398"/>
    <lineage>
        <taxon>Bacteria</taxon>
        <taxon>Pseudomonadati</taxon>
        <taxon>Pseudomonadota</taxon>
        <taxon>Gammaproteobacteria</taxon>
        <taxon>Oceanospirillales</taxon>
        <taxon>Halomonadaceae</taxon>
        <taxon>Chromohalobacter</taxon>
    </lineage>
</organism>
<feature type="chain" id="PRO_0000266306" description="Guanylate kinase">
    <location>
        <begin position="1"/>
        <end position="215"/>
    </location>
</feature>
<feature type="domain" description="Guanylate kinase-like" evidence="1">
    <location>
        <begin position="9"/>
        <end position="187"/>
    </location>
</feature>
<feature type="binding site" evidence="1">
    <location>
        <begin position="16"/>
        <end position="23"/>
    </location>
    <ligand>
        <name>ATP</name>
        <dbReference type="ChEBI" id="CHEBI:30616"/>
    </ligand>
</feature>
<reference key="1">
    <citation type="journal article" date="2011" name="Stand. Genomic Sci.">
        <title>Complete genome sequence of the halophilic and highly halotolerant Chromohalobacter salexigens type strain (1H11(T)).</title>
        <authorList>
            <person name="Copeland A."/>
            <person name="O'Connor K."/>
            <person name="Lucas S."/>
            <person name="Lapidus A."/>
            <person name="Berry K.W."/>
            <person name="Detter J.C."/>
            <person name="Del Rio T.G."/>
            <person name="Hammon N."/>
            <person name="Dalin E."/>
            <person name="Tice H."/>
            <person name="Pitluck S."/>
            <person name="Bruce D."/>
            <person name="Goodwin L."/>
            <person name="Han C."/>
            <person name="Tapia R."/>
            <person name="Saunders E."/>
            <person name="Schmutz J."/>
            <person name="Brettin T."/>
            <person name="Larimer F."/>
            <person name="Land M."/>
            <person name="Hauser L."/>
            <person name="Vargas C."/>
            <person name="Nieto J.J."/>
            <person name="Kyrpides N.C."/>
            <person name="Ivanova N."/>
            <person name="Goker M."/>
            <person name="Klenk H.P."/>
            <person name="Csonka L.N."/>
            <person name="Woyke T."/>
        </authorList>
    </citation>
    <scope>NUCLEOTIDE SEQUENCE [LARGE SCALE GENOMIC DNA]</scope>
    <source>
        <strain>ATCC BAA-138 / DSM 3043 / CIP 106854 / NCIMB 13768 / 1H11</strain>
    </source>
</reference>
<accession>Q1QSI1</accession>
<keyword id="KW-0067">ATP-binding</keyword>
<keyword id="KW-0963">Cytoplasm</keyword>
<keyword id="KW-0418">Kinase</keyword>
<keyword id="KW-0547">Nucleotide-binding</keyword>
<keyword id="KW-1185">Reference proteome</keyword>
<keyword id="KW-0808">Transferase</keyword>
<evidence type="ECO:0000255" key="1">
    <source>
        <dbReference type="HAMAP-Rule" id="MF_00328"/>
    </source>
</evidence>
<gene>
    <name evidence="1" type="primary">gmk</name>
    <name type="ordered locus">Csal_3233</name>
</gene>
<name>KGUA_CHRSD</name>
<comment type="function">
    <text evidence="1">Essential for recycling GMP and indirectly, cGMP.</text>
</comment>
<comment type="catalytic activity">
    <reaction evidence="1">
        <text>GMP + ATP = GDP + ADP</text>
        <dbReference type="Rhea" id="RHEA:20780"/>
        <dbReference type="ChEBI" id="CHEBI:30616"/>
        <dbReference type="ChEBI" id="CHEBI:58115"/>
        <dbReference type="ChEBI" id="CHEBI:58189"/>
        <dbReference type="ChEBI" id="CHEBI:456216"/>
        <dbReference type="EC" id="2.7.4.8"/>
    </reaction>
</comment>
<comment type="subcellular location">
    <subcellularLocation>
        <location evidence="1">Cytoplasm</location>
    </subcellularLocation>
</comment>
<comment type="similarity">
    <text evidence="1">Belongs to the guanylate kinase family.</text>
</comment>